<gene>
    <name evidence="1" type="primary">panB</name>
    <name type="ordered locus">EFER_0156</name>
</gene>
<organism>
    <name type="scientific">Escherichia fergusonii (strain ATCC 35469 / DSM 13698 / CCUG 18766 / IAM 14443 / JCM 21226 / LMG 7866 / NBRC 102419 / NCTC 12128 / CDC 0568-73)</name>
    <dbReference type="NCBI Taxonomy" id="585054"/>
    <lineage>
        <taxon>Bacteria</taxon>
        <taxon>Pseudomonadati</taxon>
        <taxon>Pseudomonadota</taxon>
        <taxon>Gammaproteobacteria</taxon>
        <taxon>Enterobacterales</taxon>
        <taxon>Enterobacteriaceae</taxon>
        <taxon>Escherichia</taxon>
    </lineage>
</organism>
<comment type="function">
    <text evidence="1">Catalyzes the reversible reaction in which hydroxymethyl group from 5,10-methylenetetrahydrofolate is transferred onto alpha-ketoisovalerate to form ketopantoate.</text>
</comment>
<comment type="catalytic activity">
    <reaction evidence="1">
        <text>3-methyl-2-oxobutanoate + (6R)-5,10-methylene-5,6,7,8-tetrahydrofolate + H2O = 2-dehydropantoate + (6S)-5,6,7,8-tetrahydrofolate</text>
        <dbReference type="Rhea" id="RHEA:11824"/>
        <dbReference type="ChEBI" id="CHEBI:11561"/>
        <dbReference type="ChEBI" id="CHEBI:11851"/>
        <dbReference type="ChEBI" id="CHEBI:15377"/>
        <dbReference type="ChEBI" id="CHEBI:15636"/>
        <dbReference type="ChEBI" id="CHEBI:57453"/>
        <dbReference type="EC" id="2.1.2.11"/>
    </reaction>
</comment>
<comment type="cofactor">
    <cofactor evidence="1">
        <name>Mg(2+)</name>
        <dbReference type="ChEBI" id="CHEBI:18420"/>
    </cofactor>
    <text evidence="1">Binds 1 Mg(2+) ion per subunit.</text>
</comment>
<comment type="pathway">
    <text evidence="1">Cofactor biosynthesis; (R)-pantothenate biosynthesis; (R)-pantoate from 3-methyl-2-oxobutanoate: step 1/2.</text>
</comment>
<comment type="subunit">
    <text evidence="1">Homodecamer; pentamer of dimers.</text>
</comment>
<comment type="subcellular location">
    <subcellularLocation>
        <location evidence="1">Cytoplasm</location>
    </subcellularLocation>
</comment>
<comment type="similarity">
    <text evidence="1">Belongs to the PanB family.</text>
</comment>
<keyword id="KW-0963">Cytoplasm</keyword>
<keyword id="KW-0460">Magnesium</keyword>
<keyword id="KW-0479">Metal-binding</keyword>
<keyword id="KW-0566">Pantothenate biosynthesis</keyword>
<keyword id="KW-0808">Transferase</keyword>
<accession>B7LW41</accession>
<proteinExistence type="inferred from homology"/>
<dbReference type="EC" id="2.1.2.11" evidence="1"/>
<dbReference type="EMBL" id="CU928158">
    <property type="protein sequence ID" value="CAQ87738.1"/>
    <property type="molecule type" value="Genomic_DNA"/>
</dbReference>
<dbReference type="RefSeq" id="WP_000805475.1">
    <property type="nucleotide sequence ID" value="NC_011740.1"/>
</dbReference>
<dbReference type="SMR" id="B7LW41"/>
<dbReference type="GeneID" id="75058759"/>
<dbReference type="KEGG" id="efe:EFER_0156"/>
<dbReference type="HOGENOM" id="CLU_036645_1_0_6"/>
<dbReference type="OrthoDB" id="9781789at2"/>
<dbReference type="UniPathway" id="UPA00028">
    <property type="reaction ID" value="UER00003"/>
</dbReference>
<dbReference type="Proteomes" id="UP000000745">
    <property type="component" value="Chromosome"/>
</dbReference>
<dbReference type="GO" id="GO:0005737">
    <property type="term" value="C:cytoplasm"/>
    <property type="evidence" value="ECO:0007669"/>
    <property type="project" value="UniProtKB-SubCell"/>
</dbReference>
<dbReference type="GO" id="GO:0003864">
    <property type="term" value="F:3-methyl-2-oxobutanoate hydroxymethyltransferase activity"/>
    <property type="evidence" value="ECO:0007669"/>
    <property type="project" value="UniProtKB-UniRule"/>
</dbReference>
<dbReference type="GO" id="GO:0000287">
    <property type="term" value="F:magnesium ion binding"/>
    <property type="evidence" value="ECO:0007669"/>
    <property type="project" value="TreeGrafter"/>
</dbReference>
<dbReference type="GO" id="GO:0015940">
    <property type="term" value="P:pantothenate biosynthetic process"/>
    <property type="evidence" value="ECO:0007669"/>
    <property type="project" value="UniProtKB-UniRule"/>
</dbReference>
<dbReference type="CDD" id="cd06557">
    <property type="entry name" value="KPHMT-like"/>
    <property type="match status" value="1"/>
</dbReference>
<dbReference type="FunFam" id="3.20.20.60:FF:000003">
    <property type="entry name" value="3-methyl-2-oxobutanoate hydroxymethyltransferase"/>
    <property type="match status" value="1"/>
</dbReference>
<dbReference type="Gene3D" id="3.20.20.60">
    <property type="entry name" value="Phosphoenolpyruvate-binding domains"/>
    <property type="match status" value="1"/>
</dbReference>
<dbReference type="HAMAP" id="MF_00156">
    <property type="entry name" value="PanB"/>
    <property type="match status" value="1"/>
</dbReference>
<dbReference type="InterPro" id="IPR003700">
    <property type="entry name" value="Pantoate_hydroxy_MeTrfase"/>
</dbReference>
<dbReference type="InterPro" id="IPR015813">
    <property type="entry name" value="Pyrv/PenolPyrv_kinase-like_dom"/>
</dbReference>
<dbReference type="InterPro" id="IPR040442">
    <property type="entry name" value="Pyrv_kinase-like_dom_sf"/>
</dbReference>
<dbReference type="NCBIfam" id="TIGR00222">
    <property type="entry name" value="panB"/>
    <property type="match status" value="1"/>
</dbReference>
<dbReference type="NCBIfam" id="NF001452">
    <property type="entry name" value="PRK00311.1"/>
    <property type="match status" value="1"/>
</dbReference>
<dbReference type="PANTHER" id="PTHR20881">
    <property type="entry name" value="3-METHYL-2-OXOBUTANOATE HYDROXYMETHYLTRANSFERASE"/>
    <property type="match status" value="1"/>
</dbReference>
<dbReference type="PANTHER" id="PTHR20881:SF0">
    <property type="entry name" value="3-METHYL-2-OXOBUTANOATE HYDROXYMETHYLTRANSFERASE"/>
    <property type="match status" value="1"/>
</dbReference>
<dbReference type="Pfam" id="PF02548">
    <property type="entry name" value="Pantoate_transf"/>
    <property type="match status" value="1"/>
</dbReference>
<dbReference type="PIRSF" id="PIRSF000388">
    <property type="entry name" value="Pantoate_hydroxy_MeTrfase"/>
    <property type="match status" value="1"/>
</dbReference>
<dbReference type="SUPFAM" id="SSF51621">
    <property type="entry name" value="Phosphoenolpyruvate/pyruvate domain"/>
    <property type="match status" value="1"/>
</dbReference>
<name>PANB_ESCF3</name>
<reference key="1">
    <citation type="journal article" date="2009" name="PLoS Genet.">
        <title>Organised genome dynamics in the Escherichia coli species results in highly diverse adaptive paths.</title>
        <authorList>
            <person name="Touchon M."/>
            <person name="Hoede C."/>
            <person name="Tenaillon O."/>
            <person name="Barbe V."/>
            <person name="Baeriswyl S."/>
            <person name="Bidet P."/>
            <person name="Bingen E."/>
            <person name="Bonacorsi S."/>
            <person name="Bouchier C."/>
            <person name="Bouvet O."/>
            <person name="Calteau A."/>
            <person name="Chiapello H."/>
            <person name="Clermont O."/>
            <person name="Cruveiller S."/>
            <person name="Danchin A."/>
            <person name="Diard M."/>
            <person name="Dossat C."/>
            <person name="Karoui M.E."/>
            <person name="Frapy E."/>
            <person name="Garry L."/>
            <person name="Ghigo J.M."/>
            <person name="Gilles A.M."/>
            <person name="Johnson J."/>
            <person name="Le Bouguenec C."/>
            <person name="Lescat M."/>
            <person name="Mangenot S."/>
            <person name="Martinez-Jehanne V."/>
            <person name="Matic I."/>
            <person name="Nassif X."/>
            <person name="Oztas S."/>
            <person name="Petit M.A."/>
            <person name="Pichon C."/>
            <person name="Rouy Z."/>
            <person name="Ruf C.S."/>
            <person name="Schneider D."/>
            <person name="Tourret J."/>
            <person name="Vacherie B."/>
            <person name="Vallenet D."/>
            <person name="Medigue C."/>
            <person name="Rocha E.P.C."/>
            <person name="Denamur E."/>
        </authorList>
    </citation>
    <scope>NUCLEOTIDE SEQUENCE [LARGE SCALE GENOMIC DNA]</scope>
    <source>
        <strain>ATCC 35469 / DSM 13698 / BCRC 15582 / CCUG 18766 / IAM 14443 / JCM 21226 / LMG 7866 / NBRC 102419 / NCTC 12128 / CDC 0568-73</strain>
    </source>
</reference>
<protein>
    <recommendedName>
        <fullName evidence="1">3-methyl-2-oxobutanoate hydroxymethyltransferase</fullName>
        <ecNumber evidence="1">2.1.2.11</ecNumber>
    </recommendedName>
    <alternativeName>
        <fullName evidence="1">Ketopantoate hydroxymethyltransferase</fullName>
        <shortName evidence="1">KPHMT</shortName>
    </alternativeName>
</protein>
<evidence type="ECO:0000255" key="1">
    <source>
        <dbReference type="HAMAP-Rule" id="MF_00156"/>
    </source>
</evidence>
<feature type="chain" id="PRO_1000118127" description="3-methyl-2-oxobutanoate hydroxymethyltransferase">
    <location>
        <begin position="1"/>
        <end position="264"/>
    </location>
</feature>
<feature type="active site" description="Proton acceptor" evidence="1">
    <location>
        <position position="181"/>
    </location>
</feature>
<feature type="binding site" evidence="1">
    <location>
        <begin position="45"/>
        <end position="46"/>
    </location>
    <ligand>
        <name>3-methyl-2-oxobutanoate</name>
        <dbReference type="ChEBI" id="CHEBI:11851"/>
    </ligand>
</feature>
<feature type="binding site" evidence="1">
    <location>
        <position position="45"/>
    </location>
    <ligand>
        <name>Mg(2+)</name>
        <dbReference type="ChEBI" id="CHEBI:18420"/>
    </ligand>
</feature>
<feature type="binding site" evidence="1">
    <location>
        <position position="84"/>
    </location>
    <ligand>
        <name>3-methyl-2-oxobutanoate</name>
        <dbReference type="ChEBI" id="CHEBI:11851"/>
    </ligand>
</feature>
<feature type="binding site" evidence="1">
    <location>
        <position position="84"/>
    </location>
    <ligand>
        <name>Mg(2+)</name>
        <dbReference type="ChEBI" id="CHEBI:18420"/>
    </ligand>
</feature>
<feature type="binding site" evidence="1">
    <location>
        <position position="112"/>
    </location>
    <ligand>
        <name>3-methyl-2-oxobutanoate</name>
        <dbReference type="ChEBI" id="CHEBI:11851"/>
    </ligand>
</feature>
<feature type="binding site" evidence="1">
    <location>
        <position position="114"/>
    </location>
    <ligand>
        <name>Mg(2+)</name>
        <dbReference type="ChEBI" id="CHEBI:18420"/>
    </ligand>
</feature>
<sequence length="264" mass="28159">MKPTTIASLQKCKQNKKRFATITAYDYSFAKLFAEEGLNVMLVGDSLGMTVQGHDSTLPVTVQDIAYHTAAVRRGAPNCLLLADLPFMAYSTPEQAFENAATVMRAGANMVKIEGGAWLVETVRMLTERAVPVCGHLGLTPQSVNIFGGYKVQGRGDEAGDQLLSDALALEAAGAQLLVLECVPVELAKRITEALAIPVIGIGAGNVTDGQILVMHDAFGITGGHIPKFAKNFLAETGDIRAAVRQYIAEVESGVYPGEEHSFH</sequence>